<accession>Q5I0H4</accession>
<accession>Q71DI0</accession>
<protein>
    <recommendedName>
        <fullName evidence="4">Calcium load-activated calcium channel</fullName>
        <shortName evidence="4">CLAC channel</shortName>
    </recommendedName>
    <alternativeName>
        <fullName evidence="7">GEL complex subunit TMCO1</fullName>
    </alternativeName>
    <alternativeName>
        <fullName evidence="6">Meg-2-like protein</fullName>
    </alternativeName>
    <alternativeName>
        <fullName evidence="7">Transmembrane and coiled-coil domain-containing protein 1</fullName>
    </alternativeName>
</protein>
<feature type="chain" id="PRO_0000244079" description="Calcium load-activated calcium channel">
    <location>
        <begin position="1"/>
        <end position="188"/>
    </location>
</feature>
<feature type="topological domain" description="Lumenal" evidence="7">
    <location>
        <begin position="1"/>
        <end position="4"/>
    </location>
</feature>
<feature type="transmembrane region" description="Helical" evidence="1">
    <location>
        <begin position="5"/>
        <end position="32"/>
    </location>
</feature>
<feature type="topological domain" description="Cytoplasmic" evidence="7">
    <location>
        <begin position="33"/>
        <end position="86"/>
    </location>
</feature>
<feature type="transmembrane region" description="Helical" evidence="1">
    <location>
        <begin position="87"/>
        <end position="106"/>
    </location>
</feature>
<feature type="topological domain" description="Lumenal" evidence="7">
    <location>
        <begin position="107"/>
        <end position="120"/>
    </location>
</feature>
<feature type="intramembrane region" evidence="1">
    <location>
        <begin position="121"/>
        <end position="130"/>
    </location>
</feature>
<feature type="topological domain" description="Lumenal" evidence="7">
    <location>
        <begin position="131"/>
        <end position="140"/>
    </location>
</feature>
<feature type="transmembrane region" description="Helical" evidence="1">
    <location>
        <begin position="141"/>
        <end position="162"/>
    </location>
</feature>
<feature type="topological domain" description="Cytoplasmic" evidence="7">
    <location>
        <begin position="163"/>
        <end position="188"/>
    </location>
</feature>
<feature type="coiled-coil region" evidence="5">
    <location>
        <begin position="32"/>
        <end position="89"/>
    </location>
</feature>
<feature type="modified residue" description="Phosphoserine" evidence="4">
    <location>
        <position position="60"/>
    </location>
</feature>
<feature type="modified residue" description="Phosphoserine" evidence="4">
    <location>
        <position position="188"/>
    </location>
</feature>
<feature type="sequence conflict" description="In Ref. 2; AAQ09812." evidence="7" ref="2">
    <original>K</original>
    <variation>I</variation>
    <location>
        <position position="45"/>
    </location>
</feature>
<organism>
    <name type="scientific">Rattus norvegicus</name>
    <name type="common">Rat</name>
    <dbReference type="NCBI Taxonomy" id="10116"/>
    <lineage>
        <taxon>Eukaryota</taxon>
        <taxon>Metazoa</taxon>
        <taxon>Chordata</taxon>
        <taxon>Craniata</taxon>
        <taxon>Vertebrata</taxon>
        <taxon>Euteleostomi</taxon>
        <taxon>Mammalia</taxon>
        <taxon>Eutheria</taxon>
        <taxon>Euarchontoglires</taxon>
        <taxon>Glires</taxon>
        <taxon>Rodentia</taxon>
        <taxon>Myomorpha</taxon>
        <taxon>Muroidea</taxon>
        <taxon>Muridae</taxon>
        <taxon>Murinae</taxon>
        <taxon>Rattus</taxon>
    </lineage>
</organism>
<proteinExistence type="evidence at transcript level"/>
<gene>
    <name evidence="8" type="primary">Tmco1</name>
</gene>
<reference key="1">
    <citation type="journal article" date="2004" name="Genome Res.">
        <title>The status, quality, and expansion of the NIH full-length cDNA project: the Mammalian Gene Collection (MGC).</title>
        <authorList>
            <consortium name="The MGC Project Team"/>
        </authorList>
    </citation>
    <scope>NUCLEOTIDE SEQUENCE [LARGE SCALE MRNA]</scope>
    <source>
        <tissue>Liver</tissue>
    </source>
</reference>
<reference key="2">
    <citation type="submission" date="2002-07" db="EMBL/GenBank/DDBJ databases">
        <title>Rat partial cDNA homologous to human mesangium-predominant gene, meg-2.</title>
        <authorList>
            <person name="Miyata T."/>
            <person name="Inagi R."/>
            <person name="Nangaku M."/>
            <person name="Kurokawa K."/>
        </authorList>
    </citation>
    <scope>NUCLEOTIDE SEQUENCE [MRNA] OF 11-186</scope>
    <source>
        <strain>Wistar</strain>
    </source>
</reference>
<evidence type="ECO:0000250" key="1">
    <source>
        <dbReference type="UniProtKB" id="A0A8I3PI99"/>
    </source>
</evidence>
<evidence type="ECO:0000250" key="2">
    <source>
        <dbReference type="UniProtKB" id="C5HGF3"/>
    </source>
</evidence>
<evidence type="ECO:0000250" key="3">
    <source>
        <dbReference type="UniProtKB" id="Q921L3"/>
    </source>
</evidence>
<evidence type="ECO:0000250" key="4">
    <source>
        <dbReference type="UniProtKB" id="Q9UM00"/>
    </source>
</evidence>
<evidence type="ECO:0000255" key="5"/>
<evidence type="ECO:0000303" key="6">
    <source ref="2"/>
</evidence>
<evidence type="ECO:0000305" key="7"/>
<evidence type="ECO:0000312" key="8">
    <source>
        <dbReference type="RGD" id="1359178"/>
    </source>
</evidence>
<dbReference type="EMBL" id="BC088319">
    <property type="protein sequence ID" value="AAH88319.1"/>
    <property type="molecule type" value="mRNA"/>
</dbReference>
<dbReference type="EMBL" id="AF531432">
    <property type="protein sequence ID" value="AAQ09812.1"/>
    <property type="molecule type" value="mRNA"/>
</dbReference>
<dbReference type="RefSeq" id="NP_001009631.1">
    <property type="nucleotide sequence ID" value="NM_001009631.1"/>
</dbReference>
<dbReference type="RefSeq" id="XP_017454197.1">
    <property type="nucleotide sequence ID" value="XM_017598708.1"/>
</dbReference>
<dbReference type="SMR" id="Q5I0H4"/>
<dbReference type="FunCoup" id="Q5I0H4">
    <property type="interactions" value="2541"/>
</dbReference>
<dbReference type="STRING" id="10116.ENSRNOP00000074404"/>
<dbReference type="PhosphoSitePlus" id="Q5I0H4"/>
<dbReference type="jPOST" id="Q5I0H4"/>
<dbReference type="PaxDb" id="10116-ENSRNOP00000005277"/>
<dbReference type="GeneID" id="289196"/>
<dbReference type="KEGG" id="rno:289196"/>
<dbReference type="UCSC" id="RGD:1359178">
    <property type="organism name" value="rat"/>
</dbReference>
<dbReference type="AGR" id="RGD:1359178"/>
<dbReference type="CTD" id="54499"/>
<dbReference type="RGD" id="1359178">
    <property type="gene designation" value="Tmco1"/>
</dbReference>
<dbReference type="VEuPathDB" id="HostDB:ENSRNOG00000003928"/>
<dbReference type="eggNOG" id="KOG3312">
    <property type="taxonomic scope" value="Eukaryota"/>
</dbReference>
<dbReference type="InParanoid" id="Q5I0H4"/>
<dbReference type="OrthoDB" id="342726at2759"/>
<dbReference type="PhylomeDB" id="Q5I0H4"/>
<dbReference type="PRO" id="PR:Q5I0H4"/>
<dbReference type="Proteomes" id="UP000002494">
    <property type="component" value="Chromosome 13"/>
</dbReference>
<dbReference type="Bgee" id="ENSRNOG00000003928">
    <property type="expression patterns" value="Expressed in liver and 20 other cell types or tissues"/>
</dbReference>
<dbReference type="GO" id="GO:0005737">
    <property type="term" value="C:cytoplasm"/>
    <property type="evidence" value="ECO:0000318"/>
    <property type="project" value="GO_Central"/>
</dbReference>
<dbReference type="GO" id="GO:0005783">
    <property type="term" value="C:endoplasmic reticulum"/>
    <property type="evidence" value="ECO:0000318"/>
    <property type="project" value="GO_Central"/>
</dbReference>
<dbReference type="GO" id="GO:0005789">
    <property type="term" value="C:endoplasmic reticulum membrane"/>
    <property type="evidence" value="ECO:0000250"/>
    <property type="project" value="UniProtKB"/>
</dbReference>
<dbReference type="GO" id="GO:0000139">
    <property type="term" value="C:Golgi membrane"/>
    <property type="evidence" value="ECO:0007669"/>
    <property type="project" value="UniProtKB-SubCell"/>
</dbReference>
<dbReference type="GO" id="GO:0031966">
    <property type="term" value="C:mitochondrial membrane"/>
    <property type="evidence" value="ECO:0007669"/>
    <property type="project" value="UniProtKB-SubCell"/>
</dbReference>
<dbReference type="GO" id="GO:0005739">
    <property type="term" value="C:mitochondrion"/>
    <property type="evidence" value="ECO:0000266"/>
    <property type="project" value="RGD"/>
</dbReference>
<dbReference type="GO" id="GO:0160064">
    <property type="term" value="C:multi-pass translocon complex"/>
    <property type="evidence" value="ECO:0000250"/>
    <property type="project" value="UniProtKB"/>
</dbReference>
<dbReference type="GO" id="GO:0005262">
    <property type="term" value="F:calcium channel activity"/>
    <property type="evidence" value="ECO:0000250"/>
    <property type="project" value="UniProtKB"/>
</dbReference>
<dbReference type="GO" id="GO:0043022">
    <property type="term" value="F:ribosome binding"/>
    <property type="evidence" value="ECO:0000250"/>
    <property type="project" value="UniProtKB"/>
</dbReference>
<dbReference type="GO" id="GO:0070588">
    <property type="term" value="P:calcium ion transmembrane transport"/>
    <property type="evidence" value="ECO:0000250"/>
    <property type="project" value="UniProtKB"/>
</dbReference>
<dbReference type="GO" id="GO:0032469">
    <property type="term" value="P:endoplasmic reticulum calcium ion homeostasis"/>
    <property type="evidence" value="ECO:0000250"/>
    <property type="project" value="UniProtKB"/>
</dbReference>
<dbReference type="GO" id="GO:0006983">
    <property type="term" value="P:ER overload response"/>
    <property type="evidence" value="ECO:0000250"/>
    <property type="project" value="UniProtKB"/>
</dbReference>
<dbReference type="GO" id="GO:0160063">
    <property type="term" value="P:multi-pass transmembrane protein insertion into ER membrane"/>
    <property type="evidence" value="ECO:0000250"/>
    <property type="project" value="UniProtKB"/>
</dbReference>
<dbReference type="GO" id="GO:0001503">
    <property type="term" value="P:ossification"/>
    <property type="evidence" value="ECO:0000250"/>
    <property type="project" value="UniProtKB"/>
</dbReference>
<dbReference type="InterPro" id="IPR002809">
    <property type="entry name" value="EMC3/TMCO1"/>
</dbReference>
<dbReference type="InterPro" id="IPR008559">
    <property type="entry name" value="TMCO1"/>
</dbReference>
<dbReference type="PANTHER" id="PTHR20917:SF0">
    <property type="entry name" value="CALCIUM LOAD-ACTIVATED CALCIUM CHANNEL"/>
    <property type="match status" value="1"/>
</dbReference>
<dbReference type="PANTHER" id="PTHR20917">
    <property type="entry name" value="PNAS-RELATED"/>
    <property type="match status" value="1"/>
</dbReference>
<dbReference type="Pfam" id="PF01956">
    <property type="entry name" value="EMC3_TMCO1"/>
    <property type="match status" value="1"/>
</dbReference>
<dbReference type="PIRSF" id="PIRSF023322">
    <property type="entry name" value="DUF841_euk"/>
    <property type="match status" value="1"/>
</dbReference>
<dbReference type="SMART" id="SM01415">
    <property type="entry name" value="DUF106"/>
    <property type="match status" value="1"/>
</dbReference>
<comment type="function">
    <text evidence="3 4">Endoplasmic reticulum (ER) calcium-selective channel preventing intracellular Ca2(+) stores from overfilling and maintaining calcium homeostasis in the ER. In response to endoplasmic reticulum (ER) Ca2(+) overloading, assembles into a homotetramer, forming a functional calcium-selective channel facilitating Ca2(+) release (By similarity). Mediates ER Ca2(+) homeostasis in osteoblasts and plays a key role in bone formation, via the CaMKII-HDAC4-RUNX2 signaling axis (By similarity). Component of the multi-pass translocon (MPT) complex that mediates insertion of multi-pass membrane proteins into the lipid bilayer of membranes (By similarity). The MPT complex takes over after the SEC61 complex: following membrane insertion of the first few transmembrane segments of proteins by the SEC61 complex, the MPT complex occludes the lateral gate of the SEC61 complex to promote insertion of subsequent transmembrane regions (By similarity). Within the MPT complex, the GEL subcomplex may mediate insertion of transmembrane regions into the membrane (By similarity).</text>
</comment>
<comment type="catalytic activity">
    <reaction evidence="4">
        <text>Ca(2+)(in) = Ca(2+)(out)</text>
        <dbReference type="Rhea" id="RHEA:29671"/>
        <dbReference type="ChEBI" id="CHEBI:29108"/>
    </reaction>
</comment>
<comment type="subunit">
    <text evidence="4">Homodimer and homotetramer. Homodimer under resting conditions; forms homotetramers following ER calcium overload. Component of the GET- and EMC-like (GEL) complex, composed of RAB5IF/OPTI and TMCO1. The GEL complex is part of the multi-pass translocon (MPT) complex, composed of three subcomplexes, the GEL complex (composed of RAB5IF/OPTI and TMCO1), the BOS complex (composed of NCLN/Nicalin, NOMO1 and TMEM147) and the PAT complex (composed of WDR83OS/Asterix and CCDC47). The MPT complex associates with the SEC61 complex.</text>
</comment>
<comment type="subcellular location">
    <subcellularLocation>
        <location evidence="4">Endoplasmic reticulum membrane</location>
        <topology evidence="4">Multi-pass membrane protein</topology>
    </subcellularLocation>
    <subcellularLocation>
        <location evidence="4">Golgi apparatus membrane</location>
        <topology evidence="4">Multi-pass membrane protein</topology>
    </subcellularLocation>
    <subcellularLocation>
        <location evidence="2">Mitochondrion membrane</location>
        <topology evidence="4">Multi-pass membrane protein</topology>
    </subcellularLocation>
    <text evidence="4">The first transmembrane region is required for localization to the endoplasmic reticulum.</text>
</comment>
<comment type="similarity">
    <text evidence="7">Belongs to the TMCO1 family.</text>
</comment>
<keyword id="KW-0106">Calcium</keyword>
<keyword id="KW-0107">Calcium channel</keyword>
<keyword id="KW-0109">Calcium transport</keyword>
<keyword id="KW-0175">Coiled coil</keyword>
<keyword id="KW-0256">Endoplasmic reticulum</keyword>
<keyword id="KW-0333">Golgi apparatus</keyword>
<keyword id="KW-0407">Ion channel</keyword>
<keyword id="KW-0406">Ion transport</keyword>
<keyword id="KW-0472">Membrane</keyword>
<keyword id="KW-0496">Mitochondrion</keyword>
<keyword id="KW-0597">Phosphoprotein</keyword>
<keyword id="KW-1185">Reference proteome</keyword>
<keyword id="KW-0812">Transmembrane</keyword>
<keyword id="KW-1133">Transmembrane helix</keyword>
<keyword id="KW-0813">Transport</keyword>
<sequence length="188" mass="21175">MSTMFADTLLIVFISVCTALLAEGITWVLVYRTDKYKRLKAEVEKQSKKLEKKKETITESAGRQQKKKIERQEEKLKNNNRDLSMVRMKSMFAIGFCFTALMGMFNSIFDGRVVAKLPFTPLSYIQGLSHRNLLGDDTTDCSFIFLYILCTMSIRQNIQKILGLAPSRAATKQAGGFLGPPPPSGKFS</sequence>
<name>TMCO1_RAT</name>